<name>RLMH_PSEF5</name>
<keyword id="KW-0963">Cytoplasm</keyword>
<keyword id="KW-0489">Methyltransferase</keyword>
<keyword id="KW-0698">rRNA processing</keyword>
<keyword id="KW-0949">S-adenosyl-L-methionine</keyword>
<keyword id="KW-0808">Transferase</keyword>
<feature type="chain" id="PRO_0000198163" description="Ribosomal RNA large subunit methyltransferase H">
    <location>
        <begin position="1"/>
        <end position="155"/>
    </location>
</feature>
<feature type="binding site" evidence="1">
    <location>
        <position position="73"/>
    </location>
    <ligand>
        <name>S-adenosyl-L-methionine</name>
        <dbReference type="ChEBI" id="CHEBI:59789"/>
    </ligand>
</feature>
<feature type="binding site" evidence="1">
    <location>
        <position position="104"/>
    </location>
    <ligand>
        <name>S-adenosyl-L-methionine</name>
        <dbReference type="ChEBI" id="CHEBI:59789"/>
    </ligand>
</feature>
<feature type="binding site" evidence="1">
    <location>
        <begin position="123"/>
        <end position="128"/>
    </location>
    <ligand>
        <name>S-adenosyl-L-methionine</name>
        <dbReference type="ChEBI" id="CHEBI:59789"/>
    </ligand>
</feature>
<protein>
    <recommendedName>
        <fullName evidence="1">Ribosomal RNA large subunit methyltransferase H</fullName>
        <ecNumber evidence="1">2.1.1.177</ecNumber>
    </recommendedName>
    <alternativeName>
        <fullName evidence="1">23S rRNA (pseudouridine1915-N3)-methyltransferase</fullName>
    </alternativeName>
    <alternativeName>
        <fullName evidence="1">23S rRNA m3Psi1915 methyltransferase</fullName>
    </alternativeName>
    <alternativeName>
        <fullName evidence="1">rRNA (pseudouridine-N3-)-methyltransferase RlmH</fullName>
    </alternativeName>
</protein>
<sequence>MRLRLIAVGSRMPKWVEEGWHEYAKRLPSELALELVEIPLNTRGKNADVARFIRQEGEAMLAKVGHNERIVTLEVHGKPWSTEQLAVELDRWRLDSRTVNFMVGGPEGLAPEVCARADQRWSLSPLTLPHPLVRILIGEQLYRAWTVLSGHPYHK</sequence>
<comment type="function">
    <text evidence="1">Specifically methylates the pseudouridine at position 1915 (m3Psi1915) in 23S rRNA.</text>
</comment>
<comment type="catalytic activity">
    <reaction evidence="1">
        <text>pseudouridine(1915) in 23S rRNA + S-adenosyl-L-methionine = N(3)-methylpseudouridine(1915) in 23S rRNA + S-adenosyl-L-homocysteine + H(+)</text>
        <dbReference type="Rhea" id="RHEA:42752"/>
        <dbReference type="Rhea" id="RHEA-COMP:10221"/>
        <dbReference type="Rhea" id="RHEA-COMP:10222"/>
        <dbReference type="ChEBI" id="CHEBI:15378"/>
        <dbReference type="ChEBI" id="CHEBI:57856"/>
        <dbReference type="ChEBI" id="CHEBI:59789"/>
        <dbReference type="ChEBI" id="CHEBI:65314"/>
        <dbReference type="ChEBI" id="CHEBI:74486"/>
        <dbReference type="EC" id="2.1.1.177"/>
    </reaction>
</comment>
<comment type="subunit">
    <text evidence="1">Homodimer.</text>
</comment>
<comment type="subcellular location">
    <subcellularLocation>
        <location evidence="1">Cytoplasm</location>
    </subcellularLocation>
</comment>
<comment type="similarity">
    <text evidence="1">Belongs to the RNA methyltransferase RlmH family.</text>
</comment>
<gene>
    <name evidence="1" type="primary">rlmH</name>
    <name type="ordered locus">PFL_5453</name>
</gene>
<proteinExistence type="inferred from homology"/>
<evidence type="ECO:0000255" key="1">
    <source>
        <dbReference type="HAMAP-Rule" id="MF_00658"/>
    </source>
</evidence>
<accession>Q4K5G2</accession>
<organism>
    <name type="scientific">Pseudomonas fluorescens (strain ATCC BAA-477 / NRRL B-23932 / Pf-5)</name>
    <dbReference type="NCBI Taxonomy" id="220664"/>
    <lineage>
        <taxon>Bacteria</taxon>
        <taxon>Pseudomonadati</taxon>
        <taxon>Pseudomonadota</taxon>
        <taxon>Gammaproteobacteria</taxon>
        <taxon>Pseudomonadales</taxon>
        <taxon>Pseudomonadaceae</taxon>
        <taxon>Pseudomonas</taxon>
    </lineage>
</organism>
<reference key="1">
    <citation type="journal article" date="2005" name="Nat. Biotechnol.">
        <title>Complete genome sequence of the plant commensal Pseudomonas fluorescens Pf-5.</title>
        <authorList>
            <person name="Paulsen I.T."/>
            <person name="Press C.M."/>
            <person name="Ravel J."/>
            <person name="Kobayashi D.Y."/>
            <person name="Myers G.S.A."/>
            <person name="Mavrodi D.V."/>
            <person name="DeBoy R.T."/>
            <person name="Seshadri R."/>
            <person name="Ren Q."/>
            <person name="Madupu R."/>
            <person name="Dodson R.J."/>
            <person name="Durkin A.S."/>
            <person name="Brinkac L.M."/>
            <person name="Daugherty S.C."/>
            <person name="Sullivan S.A."/>
            <person name="Rosovitz M.J."/>
            <person name="Gwinn M.L."/>
            <person name="Zhou L."/>
            <person name="Schneider D.J."/>
            <person name="Cartinhour S.W."/>
            <person name="Nelson W.C."/>
            <person name="Weidman J."/>
            <person name="Watkins K."/>
            <person name="Tran K."/>
            <person name="Khouri H."/>
            <person name="Pierson E.A."/>
            <person name="Pierson L.S. III"/>
            <person name="Thomashow L.S."/>
            <person name="Loper J.E."/>
        </authorList>
    </citation>
    <scope>NUCLEOTIDE SEQUENCE [LARGE SCALE GENOMIC DNA]</scope>
    <source>
        <strain>ATCC BAA-477 / NRRL B-23932 / Pf-5</strain>
    </source>
</reference>
<dbReference type="EC" id="2.1.1.177" evidence="1"/>
<dbReference type="EMBL" id="CP000076">
    <property type="protein sequence ID" value="AAY94663.1"/>
    <property type="molecule type" value="Genomic_DNA"/>
</dbReference>
<dbReference type="RefSeq" id="WP_011063671.1">
    <property type="nucleotide sequence ID" value="NC_004129.6"/>
</dbReference>
<dbReference type="SMR" id="Q4K5G2"/>
<dbReference type="STRING" id="220664.PFL_5453"/>
<dbReference type="GeneID" id="89625228"/>
<dbReference type="KEGG" id="pfl:PFL_5453"/>
<dbReference type="eggNOG" id="COG1576">
    <property type="taxonomic scope" value="Bacteria"/>
</dbReference>
<dbReference type="HOGENOM" id="CLU_100552_1_0_6"/>
<dbReference type="Proteomes" id="UP000008540">
    <property type="component" value="Chromosome"/>
</dbReference>
<dbReference type="GO" id="GO:0005737">
    <property type="term" value="C:cytoplasm"/>
    <property type="evidence" value="ECO:0007669"/>
    <property type="project" value="UniProtKB-SubCell"/>
</dbReference>
<dbReference type="GO" id="GO:0070038">
    <property type="term" value="F:rRNA (pseudouridine-N3-)-methyltransferase activity"/>
    <property type="evidence" value="ECO:0007669"/>
    <property type="project" value="UniProtKB-UniRule"/>
</dbReference>
<dbReference type="CDD" id="cd18081">
    <property type="entry name" value="RlmH-like"/>
    <property type="match status" value="1"/>
</dbReference>
<dbReference type="Gene3D" id="3.40.1280.10">
    <property type="match status" value="1"/>
</dbReference>
<dbReference type="HAMAP" id="MF_00658">
    <property type="entry name" value="23SrRNA_methyltr_H"/>
    <property type="match status" value="1"/>
</dbReference>
<dbReference type="InterPro" id="IPR029028">
    <property type="entry name" value="Alpha/beta_knot_MTases"/>
</dbReference>
<dbReference type="InterPro" id="IPR003742">
    <property type="entry name" value="RlmH-like"/>
</dbReference>
<dbReference type="InterPro" id="IPR029026">
    <property type="entry name" value="tRNA_m1G_MTases_N"/>
</dbReference>
<dbReference type="NCBIfam" id="NF000986">
    <property type="entry name" value="PRK00103.1-4"/>
    <property type="match status" value="1"/>
</dbReference>
<dbReference type="NCBIfam" id="TIGR00246">
    <property type="entry name" value="tRNA_RlmH_YbeA"/>
    <property type="match status" value="1"/>
</dbReference>
<dbReference type="PANTHER" id="PTHR33603">
    <property type="entry name" value="METHYLTRANSFERASE"/>
    <property type="match status" value="1"/>
</dbReference>
<dbReference type="PANTHER" id="PTHR33603:SF1">
    <property type="entry name" value="RIBOSOMAL RNA LARGE SUBUNIT METHYLTRANSFERASE H"/>
    <property type="match status" value="1"/>
</dbReference>
<dbReference type="Pfam" id="PF02590">
    <property type="entry name" value="SPOUT_MTase"/>
    <property type="match status" value="1"/>
</dbReference>
<dbReference type="PIRSF" id="PIRSF004505">
    <property type="entry name" value="MT_bac"/>
    <property type="match status" value="1"/>
</dbReference>
<dbReference type="SUPFAM" id="SSF75217">
    <property type="entry name" value="alpha/beta knot"/>
    <property type="match status" value="1"/>
</dbReference>